<dbReference type="EC" id="1.15.1.1"/>
<dbReference type="EMBL" id="JF411744">
    <property type="protein sequence ID" value="AAC96613.1"/>
    <property type="molecule type" value="Genomic_DNA"/>
</dbReference>
<dbReference type="PIR" id="T17736">
    <property type="entry name" value="T17736"/>
</dbReference>
<dbReference type="RefSeq" id="NP_048593.1">
    <property type="nucleotide sequence ID" value="NC_000852.5"/>
</dbReference>
<dbReference type="SMR" id="Q90023"/>
<dbReference type="GeneID" id="918416"/>
<dbReference type="KEGG" id="vg:918416"/>
<dbReference type="OrthoDB" id="15673at10239"/>
<dbReference type="Proteomes" id="UP000000862">
    <property type="component" value="Genome"/>
</dbReference>
<dbReference type="GO" id="GO:0005507">
    <property type="term" value="F:copper ion binding"/>
    <property type="evidence" value="ECO:0007669"/>
    <property type="project" value="InterPro"/>
</dbReference>
<dbReference type="GO" id="GO:0004784">
    <property type="term" value="F:superoxide dismutase activity"/>
    <property type="evidence" value="ECO:0007669"/>
    <property type="project" value="UniProtKB-EC"/>
</dbReference>
<dbReference type="CDD" id="cd00305">
    <property type="entry name" value="Cu-Zn_Superoxide_Dismutase"/>
    <property type="match status" value="1"/>
</dbReference>
<dbReference type="FunFam" id="2.60.40.200:FF:000003">
    <property type="entry name" value="Superoxide dismutase [Cu-Zn], chloroplastic"/>
    <property type="match status" value="1"/>
</dbReference>
<dbReference type="Gene3D" id="2.60.40.200">
    <property type="entry name" value="Superoxide dismutase, copper/zinc binding domain"/>
    <property type="match status" value="1"/>
</dbReference>
<dbReference type="InterPro" id="IPR036423">
    <property type="entry name" value="SOD-like_Cu/Zn_dom_sf"/>
</dbReference>
<dbReference type="InterPro" id="IPR024134">
    <property type="entry name" value="SOD_Cu/Zn_/chaperone"/>
</dbReference>
<dbReference type="InterPro" id="IPR018152">
    <property type="entry name" value="SOD_Cu/Zn_BS"/>
</dbReference>
<dbReference type="InterPro" id="IPR001424">
    <property type="entry name" value="SOD_Cu_Zn_dom"/>
</dbReference>
<dbReference type="PANTHER" id="PTHR10003">
    <property type="entry name" value="SUPEROXIDE DISMUTASE CU-ZN -RELATED"/>
    <property type="match status" value="1"/>
</dbReference>
<dbReference type="Pfam" id="PF00080">
    <property type="entry name" value="Sod_Cu"/>
    <property type="match status" value="1"/>
</dbReference>
<dbReference type="PRINTS" id="PR00068">
    <property type="entry name" value="CUZNDISMTASE"/>
</dbReference>
<dbReference type="SUPFAM" id="SSF49329">
    <property type="entry name" value="Cu,Zn superoxide dismutase-like"/>
    <property type="match status" value="1"/>
</dbReference>
<dbReference type="PROSITE" id="PS00087">
    <property type="entry name" value="SOD_CU_ZN_1"/>
    <property type="match status" value="1"/>
</dbReference>
<dbReference type="PROSITE" id="PS00332">
    <property type="entry name" value="SOD_CU_ZN_2"/>
    <property type="match status" value="1"/>
</dbReference>
<organismHost>
    <name type="scientific">Chlorella</name>
    <dbReference type="NCBI Taxonomy" id="3071"/>
</organismHost>
<proteinExistence type="inferred from homology"/>
<sequence length="187" mass="19748">MSLLPTGTLILLVLFILVLITMTKNTSSLNVTKPVSAIAVLEGPVKGTVRFVEESSKVKISVDISGLKPNRKHGFHVHEAGDLTDGCTSACAHFNPFGTAHGGPDSKIRHVGDLGNILADKNGKAKYSFYDSMIKLRGKCNIIGRAIVVHADTDDLGLGGNAESLKTGNAGKRIGCAVIGYAKENFC</sequence>
<comment type="function">
    <text>Destroys radicals which are normally produced within the cells and which are toxic to biological systems.</text>
</comment>
<comment type="catalytic activity">
    <reaction>
        <text>2 superoxide + 2 H(+) = H2O2 + O2</text>
        <dbReference type="Rhea" id="RHEA:20696"/>
        <dbReference type="ChEBI" id="CHEBI:15378"/>
        <dbReference type="ChEBI" id="CHEBI:15379"/>
        <dbReference type="ChEBI" id="CHEBI:16240"/>
        <dbReference type="ChEBI" id="CHEBI:18421"/>
        <dbReference type="EC" id="1.15.1.1"/>
    </reaction>
</comment>
<comment type="cofactor">
    <cofactor evidence="1">
        <name>Cu cation</name>
        <dbReference type="ChEBI" id="CHEBI:23378"/>
    </cofactor>
    <text evidence="1">Binds 1 copper ion per subunit.</text>
</comment>
<comment type="cofactor">
    <cofactor evidence="1">
        <name>Zn(2+)</name>
        <dbReference type="ChEBI" id="CHEBI:29105"/>
    </cofactor>
    <text evidence="1">Binds 1 zinc ion per subunit.</text>
</comment>
<comment type="similarity">
    <text evidence="3">Belongs to the Cu-Zn superoxide dismutase family.</text>
</comment>
<accession>Q90023</accession>
<feature type="signal peptide" evidence="2">
    <location>
        <begin position="1"/>
        <end position="21"/>
    </location>
</feature>
<feature type="chain" id="PRO_0000032843" description="Superoxide dismutase [Cu-Zn]">
    <location>
        <begin position="22"/>
        <end position="187"/>
    </location>
</feature>
<feature type="binding site" evidence="1">
    <location>
        <position position="76"/>
    </location>
    <ligand>
        <name>Cu cation</name>
        <dbReference type="ChEBI" id="CHEBI:23378"/>
        <note>catalytic</note>
    </ligand>
</feature>
<feature type="binding site" evidence="1">
    <location>
        <position position="78"/>
    </location>
    <ligand>
        <name>Cu cation</name>
        <dbReference type="ChEBI" id="CHEBI:23378"/>
        <note>catalytic</note>
    </ligand>
</feature>
<feature type="binding site" evidence="1">
    <location>
        <position position="93"/>
    </location>
    <ligand>
        <name>Cu cation</name>
        <dbReference type="ChEBI" id="CHEBI:23378"/>
        <note>catalytic</note>
    </ligand>
</feature>
<feature type="binding site" evidence="1">
    <location>
        <position position="93"/>
    </location>
    <ligand>
        <name>Zn(2+)</name>
        <dbReference type="ChEBI" id="CHEBI:29105"/>
        <note>structural</note>
    </ligand>
</feature>
<feature type="binding site" evidence="1">
    <location>
        <position position="101"/>
    </location>
    <ligand>
        <name>Zn(2+)</name>
        <dbReference type="ChEBI" id="CHEBI:29105"/>
        <note>structural</note>
    </ligand>
</feature>
<feature type="binding site" evidence="1">
    <location>
        <position position="110"/>
    </location>
    <ligand>
        <name>Zn(2+)</name>
        <dbReference type="ChEBI" id="CHEBI:29105"/>
        <note>structural</note>
    </ligand>
</feature>
<feature type="binding site" evidence="1">
    <location>
        <position position="113"/>
    </location>
    <ligand>
        <name>Zn(2+)</name>
        <dbReference type="ChEBI" id="CHEBI:29105"/>
        <note>structural</note>
    </ligand>
</feature>
<feature type="binding site" evidence="1">
    <location>
        <position position="150"/>
    </location>
    <ligand>
        <name>Cu cation</name>
        <dbReference type="ChEBI" id="CHEBI:23378"/>
        <note>catalytic</note>
    </ligand>
</feature>
<feature type="disulfide bond" evidence="1">
    <location>
        <begin position="87"/>
        <end position="176"/>
    </location>
</feature>
<gene>
    <name type="ordered locus">A245R</name>
</gene>
<name>SODC_PBCV1</name>
<reference key="1">
    <citation type="journal article" date="1995" name="Virology">
        <title>Analysis of 45 kb of DNA located at the left end of the chlorella virus PBCV-1 genome.</title>
        <authorList>
            <person name="Lu Z."/>
            <person name="Li Y."/>
            <person name="Zhang Y."/>
            <person name="Kutish G.F."/>
            <person name="Rock D.L."/>
            <person name="van Etten J.L."/>
        </authorList>
    </citation>
    <scope>NUCLEOTIDE SEQUENCE [LARGE SCALE GENOMIC DNA]</scope>
</reference>
<evidence type="ECO:0000250" key="1"/>
<evidence type="ECO:0000255" key="2"/>
<evidence type="ECO:0000305" key="3"/>
<organism>
    <name type="scientific">Paramecium bursaria Chlorella virus 1</name>
    <name type="common">PBCV-1</name>
    <dbReference type="NCBI Taxonomy" id="10506"/>
    <lineage>
        <taxon>Viruses</taxon>
        <taxon>Varidnaviria</taxon>
        <taxon>Bamfordvirae</taxon>
        <taxon>Nucleocytoviricota</taxon>
        <taxon>Megaviricetes</taxon>
        <taxon>Algavirales</taxon>
        <taxon>Phycodnaviridae</taxon>
        <taxon>Chlorovirus</taxon>
    </lineage>
</organism>
<protein>
    <recommendedName>
        <fullName>Superoxide dismutase [Cu-Zn]</fullName>
        <ecNumber>1.15.1.1</ecNumber>
    </recommendedName>
</protein>
<keyword id="KW-0049">Antioxidant</keyword>
<keyword id="KW-0186">Copper</keyword>
<keyword id="KW-1015">Disulfide bond</keyword>
<keyword id="KW-0479">Metal-binding</keyword>
<keyword id="KW-0560">Oxidoreductase</keyword>
<keyword id="KW-1185">Reference proteome</keyword>
<keyword id="KW-0732">Signal</keyword>
<keyword id="KW-0862">Zinc</keyword>